<accession>B2GI04</accession>
<keyword id="KW-0143">Chaperone</keyword>
<keyword id="KW-0963">Cytoplasm</keyword>
<keyword id="KW-0996">Nickel insertion</keyword>
<keyword id="KW-1185">Reference proteome</keyword>
<name>UREF_KOCRD</name>
<reference key="1">
    <citation type="journal article" date="2008" name="J. Bacteriol.">
        <title>Complete genome sequence of the soil actinomycete Kocuria rhizophila.</title>
        <authorList>
            <person name="Takarada H."/>
            <person name="Sekine M."/>
            <person name="Kosugi H."/>
            <person name="Matsuo Y."/>
            <person name="Fujisawa T."/>
            <person name="Omata S."/>
            <person name="Kishi E."/>
            <person name="Shimizu A."/>
            <person name="Tsukatani N."/>
            <person name="Tanikawa S."/>
            <person name="Fujita N."/>
            <person name="Harayama S."/>
        </authorList>
    </citation>
    <scope>NUCLEOTIDE SEQUENCE [LARGE SCALE GENOMIC DNA]</scope>
    <source>
        <strain>ATCC 9341 / DSM 348 / NBRC 103217 / DC2201</strain>
    </source>
</reference>
<protein>
    <recommendedName>
        <fullName evidence="1">Urease accessory protein UreF</fullName>
    </recommendedName>
</protein>
<gene>
    <name evidence="1" type="primary">ureF</name>
    <name type="ordered locus">KRH_21690</name>
</gene>
<comment type="function">
    <text evidence="1">Required for maturation of urease via the functional incorporation of the urease nickel metallocenter.</text>
</comment>
<comment type="subunit">
    <text evidence="1">UreD, UreF and UreG form a complex that acts as a GTP-hydrolysis-dependent molecular chaperone, activating the urease apoprotein by helping to assemble the nickel containing metallocenter of UreC. The UreE protein probably delivers the nickel.</text>
</comment>
<comment type="subcellular location">
    <subcellularLocation>
        <location evidence="1">Cytoplasm</location>
    </subcellularLocation>
</comment>
<comment type="similarity">
    <text evidence="1">Belongs to the UreF family.</text>
</comment>
<organism>
    <name type="scientific">Kocuria rhizophila (strain ATCC 9341 / DSM 348 / NBRC 103217 / DC2201)</name>
    <dbReference type="NCBI Taxonomy" id="378753"/>
    <lineage>
        <taxon>Bacteria</taxon>
        <taxon>Bacillati</taxon>
        <taxon>Actinomycetota</taxon>
        <taxon>Actinomycetes</taxon>
        <taxon>Micrococcales</taxon>
        <taxon>Micrococcaceae</taxon>
        <taxon>Kocuria</taxon>
    </lineage>
</organism>
<dbReference type="EMBL" id="AP009152">
    <property type="protein sequence ID" value="BAG30516.1"/>
    <property type="molecule type" value="Genomic_DNA"/>
</dbReference>
<dbReference type="RefSeq" id="WP_012399237.1">
    <property type="nucleotide sequence ID" value="NC_010617.1"/>
</dbReference>
<dbReference type="SMR" id="B2GI04"/>
<dbReference type="STRING" id="378753.KRH_21690"/>
<dbReference type="KEGG" id="krh:KRH_21690"/>
<dbReference type="eggNOG" id="COG0830">
    <property type="taxonomic scope" value="Bacteria"/>
</dbReference>
<dbReference type="HOGENOM" id="CLU_049215_4_2_11"/>
<dbReference type="OrthoDB" id="9798772at2"/>
<dbReference type="Proteomes" id="UP000008838">
    <property type="component" value="Chromosome"/>
</dbReference>
<dbReference type="GO" id="GO:0005737">
    <property type="term" value="C:cytoplasm"/>
    <property type="evidence" value="ECO:0007669"/>
    <property type="project" value="UniProtKB-SubCell"/>
</dbReference>
<dbReference type="GO" id="GO:0016151">
    <property type="term" value="F:nickel cation binding"/>
    <property type="evidence" value="ECO:0007669"/>
    <property type="project" value="UniProtKB-UniRule"/>
</dbReference>
<dbReference type="Gene3D" id="1.10.4190.10">
    <property type="entry name" value="Urease accessory protein UreF"/>
    <property type="match status" value="1"/>
</dbReference>
<dbReference type="HAMAP" id="MF_01385">
    <property type="entry name" value="UreF"/>
    <property type="match status" value="1"/>
</dbReference>
<dbReference type="InterPro" id="IPR002639">
    <property type="entry name" value="UreF"/>
</dbReference>
<dbReference type="InterPro" id="IPR038277">
    <property type="entry name" value="UreF_sf"/>
</dbReference>
<dbReference type="PANTHER" id="PTHR33620">
    <property type="entry name" value="UREASE ACCESSORY PROTEIN F"/>
    <property type="match status" value="1"/>
</dbReference>
<dbReference type="PANTHER" id="PTHR33620:SF1">
    <property type="entry name" value="UREASE ACCESSORY PROTEIN F"/>
    <property type="match status" value="1"/>
</dbReference>
<dbReference type="Pfam" id="PF01730">
    <property type="entry name" value="UreF"/>
    <property type="match status" value="1"/>
</dbReference>
<dbReference type="PIRSF" id="PIRSF009467">
    <property type="entry name" value="Ureas_acces_UreF"/>
    <property type="match status" value="1"/>
</dbReference>
<proteinExistence type="inferred from homology"/>
<sequence length="234" mass="25660">MVEPSLAGLLGLMQLTDSALPTGAFSHSLGFETYMAAEQLEDRESFSAWLEMFVDQQLTHTDALAVRLVYAAGDFERVEDLDELVTAQALPRQIREGGTTMGRRLLSIGARSYPGEWVRRYQQGVEEERLRGHQATVWGVLARGLDVPEDTAVASHVYAAVISLTQNAVRGIPLGQNTGQAVIRAAQEWVGRAVATSRRLSEEGIAEEVLGAVAPGLEIAQMNHERQRARLFMS</sequence>
<feature type="chain" id="PRO_1000145120" description="Urease accessory protein UreF">
    <location>
        <begin position="1"/>
        <end position="234"/>
    </location>
</feature>
<evidence type="ECO:0000255" key="1">
    <source>
        <dbReference type="HAMAP-Rule" id="MF_01385"/>
    </source>
</evidence>